<sequence length="587" mass="64922">MEGESVKPSPQPTAQAEDEEKNRRTVTVNAAHMGKAFKVMNELRSKRLLCDVMIVAEDVEVEAHRVVLAACSPYFCAMFTGDMSESKAKKIEIKDVDGQTLSKLIDYIYTAEIEVTEENVQVLLPAASLLQLMDVRQNCCDFLQSQLHPTNCLGIRAFADVHTCTDLLQQANAYAEQHFPEVMLGEEFLSLSLDQVCSLISSDKLTVSSEEKVFEAVISWINYEKETRLDHMAKLMEHVRLPLLPRDYLVQTVEEEALIKNNNTCKDFLIEAMKYHLLPLDQRLLIKNPRTKPRTPVSLPKVMIVVGGQAPKAIRSVECYDFEEGRWDQIAELPSRRCRAGVVFMAGHVYAVGGFNGSLRVRTVDVYDGVKDQWTSIASMQERRSTLGAAVLNDLLYAVGGFDGSTGLASVEAYSYKTNEWFFVAPMNTRRSSVGVGVVEGKLYAVGGYDGASRQCLSTVEQYNPATNEWIYVADMSTRRSGAGVGVLSGQLYATGGHDGPLVRKSVEVYDPGTNTWKQVADMNMCRRNAGVCAVNGLLYVVGGDDGSCNLASVEYYNPVTDKWTLLPTNMSTGRSYAGVAVIHKSL</sequence>
<comment type="function">
    <text evidence="6 8 9 10">Substrate-specific adapter of a BCR (BTB-CUL3-RBX1) E3 ubiquitin ligase complex that acts as a regulator of ion transport in the distal nephron (PubMed:24821705, PubMed:25831548, PubMed:28052936, PubMed:35621709). The BCR(KLHL3) complex acts by mediating ubiquitination and degradation of WNK1 and WNK4, two activators of Na-Cl cotransporter SLC12A3/NCC in distal convoluted tubule cells of kidney, thereby regulating NaCl reabsorption (PubMed:24821705, PubMed:28052936, PubMed:35621709). The BCR(KLHL3) complex also mediates ubiquitination of CLDN8, a tight-junction protein required for paracellular chloride transport in the kidney, leading to its degradation (PubMed:25831548).</text>
</comment>
<comment type="pathway">
    <text evidence="1">Protein modification; protein ubiquitination.</text>
</comment>
<comment type="subunit">
    <text evidence="1 8">Homodimer (By similarity). Component of the BCR(KLHL3) E3 ubiquitin ligase complex, at least composed of CUL3 and KLHL3 and RBX1 (By similarity). Interacts with CLDN8 (PubMed:25831548).</text>
</comment>
<comment type="subcellular location">
    <subcellularLocation>
        <location evidence="1">Cytoplasm</location>
        <location evidence="1">Cytosol</location>
    </subcellularLocation>
    <subcellularLocation>
        <location evidence="1">Cytoplasm</location>
        <location evidence="1">Cytoskeleton</location>
    </subcellularLocation>
</comment>
<comment type="alternative products">
    <event type="alternative splicing"/>
    <isoform>
        <id>E0CZ16-1</id>
        <name>1</name>
        <sequence type="displayed"/>
    </isoform>
    <isoform>
        <id>E0CZ16-2</id>
        <name>2</name>
        <sequence type="described" ref="VSP_053297"/>
    </isoform>
</comment>
<comment type="tissue specificity">
    <text evidence="4 5 9">Present at high level in brain and kidney (at protein level) (PubMed:28052936). Weakly expressed in other tissues (PubMed:28052936). In kidney, predominantly localizes to the distal convoluted tubule (DCT) and collecting duct, with apical localization in the DCT (at protein level) (PubMed:22266938, PubMed:22406640).</text>
</comment>
<comment type="PTM">
    <text evidence="1 7">Phosphorylation at Ser-433 by PKA or PKC decreases the interaction with WNK1 and WNK4, leading to inhibit their degradation by the BCR(KLHL3) complex (By similarity). Phosphorylated at Ser-433 by PKC in response to angiotensin II signaling, decreasing ability to promote degradation of WNK1 and WNK4, leading to activation of Na-Cl cotransporter SLC12A3/NCC (PubMed:25313067). Phosphorylation at Ser-433 is increased by insulin (By similarity). Dephosphorylated at Ser-433 by calcineurin PPP3CA, promoting degradation of WNK1 and WNK4 (By similarity).</text>
</comment>
<comment type="disruption phenotype">
    <text evidence="9">Mice display pseudohypoaldosteronism type II (PHA2)-like phenotype, such as salt-sensitive hypertension (PubMed:28052936). In kidney, increased level of Wnk1 and Wnk4 kinases is observed, while Wnk1 and Wnk4 levels are unchanged in other tissues (PubMed:28052936).</text>
</comment>
<comment type="similarity">
    <text evidence="12">Belongs to the KLHL3 family.</text>
</comment>
<accession>E0CZ16</accession>
<accession>F7A5U9</accession>
<accession>I6L891</accession>
<reference key="1">
    <citation type="journal article" date="2009" name="PLoS Biol.">
        <title>Lineage-specific biology revealed by a finished genome assembly of the mouse.</title>
        <authorList>
            <person name="Church D.M."/>
            <person name="Goodstadt L."/>
            <person name="Hillier L.W."/>
            <person name="Zody M.C."/>
            <person name="Goldstein S."/>
            <person name="She X."/>
            <person name="Bult C.J."/>
            <person name="Agarwala R."/>
            <person name="Cherry J.L."/>
            <person name="DiCuccio M."/>
            <person name="Hlavina W."/>
            <person name="Kapustin Y."/>
            <person name="Meric P."/>
            <person name="Maglott D."/>
            <person name="Birtle Z."/>
            <person name="Marques A.C."/>
            <person name="Graves T."/>
            <person name="Zhou S."/>
            <person name="Teague B."/>
            <person name="Potamousis K."/>
            <person name="Churas C."/>
            <person name="Place M."/>
            <person name="Herschleb J."/>
            <person name="Runnheim R."/>
            <person name="Forrest D."/>
            <person name="Amos-Landgraf J."/>
            <person name="Schwartz D.C."/>
            <person name="Cheng Z."/>
            <person name="Lindblad-Toh K."/>
            <person name="Eichler E.E."/>
            <person name="Ponting C.P."/>
        </authorList>
    </citation>
    <scope>NUCLEOTIDE SEQUENCE [LARGE SCALE GENOMIC DNA]</scope>
    <source>
        <strain>C57BL/6J</strain>
    </source>
</reference>
<reference key="2">
    <citation type="journal article" date="2012" name="Nature">
        <title>Mutations in kelch-like 3 and cullin 3 cause hypertension and electrolyte abnormalities.</title>
        <authorList>
            <person name="Boyden L.M."/>
            <person name="Choi M."/>
            <person name="Choate K.A."/>
            <person name="Nelson-Williams C.J."/>
            <person name="Farhi A."/>
            <person name="Toka H.R."/>
            <person name="Tikhonova I.R."/>
            <person name="Bjornson R."/>
            <person name="Mane S.M."/>
            <person name="Colussi G."/>
            <person name="Lebel M."/>
            <person name="Gordon R.D."/>
            <person name="Semmekrot B.A."/>
            <person name="Poujol A."/>
            <person name="Valimaki M.J."/>
            <person name="De Ferrari M.E."/>
            <person name="Sanjad S.A."/>
            <person name="Gutkin M."/>
            <person name="Karet F.E."/>
            <person name="Tucci J.R."/>
            <person name="Stockigt J.R."/>
            <person name="Keppler-Noreuil K.M."/>
            <person name="Porter C.C."/>
            <person name="Anand S.K."/>
            <person name="Whiteford M.L."/>
            <person name="Davis I.D."/>
            <person name="Dewar S.B."/>
            <person name="Bettinelli A."/>
            <person name="Fadrowski J.J."/>
            <person name="Belsha C.W."/>
            <person name="Hunley T.E."/>
            <person name="Nelson R.D."/>
            <person name="Trachtman H."/>
            <person name="Cole T.R."/>
            <person name="Pinsk M."/>
            <person name="Bockenhauer D."/>
            <person name="Shenoy M."/>
            <person name="Vaidyanathan P."/>
            <person name="Foreman J.W."/>
            <person name="Rasoulpour M."/>
            <person name="Thameem F."/>
            <person name="Al-Shahrouri H.Z."/>
            <person name="Radhakrishnan J."/>
            <person name="Gharavi A.G."/>
            <person name="Goilav B."/>
            <person name="Lifton R.P."/>
        </authorList>
    </citation>
    <scope>TISSUE SPECIFICITY</scope>
</reference>
<reference key="3">
    <citation type="journal article" date="2012" name="Nat. Genet.">
        <title>KLHL3 mutations cause familial hyperkalemic hypertension by impairing ion transport in the distal nephron.</title>
        <authorList>
            <person name="Louis-Dit-Picard H."/>
            <person name="Barc J."/>
            <person name="Trujillano D."/>
            <person name="Miserey-Lenkei S."/>
            <person name="Bouatia-Naji N."/>
            <person name="Pylypenko O."/>
            <person name="Beaurain G."/>
            <person name="Bonnefond A."/>
            <person name="Sand O."/>
            <person name="Simian C."/>
            <person name="Vidal-Petiot E."/>
            <person name="Soukaseum C."/>
            <person name="Mandet C."/>
            <person name="Broux F."/>
            <person name="Chabre O."/>
            <person name="Delahousse M."/>
            <person name="Esnault V."/>
            <person name="Fiquet B."/>
            <person name="Houillier P."/>
            <person name="Bagnis C.I."/>
            <person name="Koenig J."/>
            <person name="Konrad M."/>
            <person name="Landais P."/>
            <person name="Mourani C."/>
            <person name="Niaudet P."/>
            <person name="Probst V."/>
            <person name="Thauvin C."/>
            <person name="Unwin R.J."/>
            <person name="Soroka S.D."/>
            <person name="Ehret G."/>
            <person name="Ossowski S."/>
            <person name="Caulfield M."/>
            <person name="Bruneval P."/>
            <person name="Estivill X."/>
            <person name="Froguel P."/>
            <person name="Hadchouel J."/>
            <person name="Schott J.J."/>
            <person name="Jeunemaitre X."/>
        </authorList>
    </citation>
    <scope>TISSUE SPECIFICITY</scope>
</reference>
<reference key="4">
    <citation type="journal article" date="2014" name="Hum. Mol. Genet.">
        <title>Impaired degradation of WNK1 and WNK4 kinases causes PHAII in mutant KLHL3 knock-in mice.</title>
        <authorList>
            <person name="Susa K."/>
            <person name="Sohara E."/>
            <person name="Rai T."/>
            <person name="Zeniya M."/>
            <person name="Mori Y."/>
            <person name="Mori T."/>
            <person name="Chiga M."/>
            <person name="Nomura N."/>
            <person name="Nishida H."/>
            <person name="Takahashi D."/>
            <person name="Isobe K."/>
            <person name="Inoue Y."/>
            <person name="Takeishi K."/>
            <person name="Takeda N."/>
            <person name="Sasaki S."/>
            <person name="Uchida S."/>
        </authorList>
    </citation>
    <scope>FUNCTION</scope>
    <scope>MUTAGENESIS OF ARG-528</scope>
</reference>
<reference key="5">
    <citation type="journal article" date="2014" name="Proc. Natl. Acad. Sci. U.S.A.">
        <title>Angiotensin II signaling via protein kinase C phosphorylates Kelch-like 3, preventing WNK4 degradation.</title>
        <authorList>
            <person name="Shibata S."/>
            <person name="Arroyo J.P."/>
            <person name="Castaneda-Bueno M."/>
            <person name="Puthumana J."/>
            <person name="Zhang J."/>
            <person name="Uchida S."/>
            <person name="Stone K.L."/>
            <person name="Lam T.T."/>
            <person name="Lifton R.P."/>
        </authorList>
    </citation>
    <scope>PHOSPHORYLATION AT SER-433</scope>
</reference>
<reference key="6">
    <citation type="journal article" date="2015" name="Proc. Natl. Acad. Sci. U.S.A.">
        <title>KLHL3 regulates paracellular chloride transport in the kidney by ubiquitination of claudin-8.</title>
        <authorList>
            <person name="Gong Y."/>
            <person name="Wang J."/>
            <person name="Yang J."/>
            <person name="Gonzales E."/>
            <person name="Perez R."/>
            <person name="Hou J."/>
        </authorList>
    </citation>
    <scope>FUNCTION</scope>
    <scope>INTERACTION WITH CLDN8</scope>
</reference>
<reference key="7">
    <citation type="journal article" date="2017" name="Mol. Cell. Biol.">
        <title>KLHL3 knockout mice reveal the physiological role of KLHL3 and the pathophysiology of pseudohypoaldosteronism type II caused by mutant KLHL3.</title>
        <authorList>
            <person name="Sasaki E."/>
            <person name="Susa K."/>
            <person name="Mori T."/>
            <person name="Isobe K."/>
            <person name="Araki Y."/>
            <person name="Inoue Y."/>
            <person name="Yoshizaki Y."/>
            <person name="Ando F."/>
            <person name="Mori Y."/>
            <person name="Mandai S."/>
            <person name="Zeniya M."/>
            <person name="Takahashi D."/>
            <person name="Nomura N."/>
            <person name="Rai T."/>
            <person name="Uchida S."/>
            <person name="Sohara E."/>
        </authorList>
    </citation>
    <scope>FUNCTION</scope>
    <scope>TISSUE SPECIFICITY</scope>
    <scope>DISRUPTION PHENOTYPE</scope>
</reference>
<reference key="8">
    <citation type="journal article" date="2022" name="FASEB J.">
        <title>Generation and analysis of pseudohypoaldosteronism type II knock-in mice caused by a nonsense KLHL3 mutation in the Kelch domain.</title>
        <authorList>
            <person name="Lin C.M."/>
            <person name="Sung C.C."/>
            <person name="Yang S.S."/>
            <person name="Chen Y.C."/>
            <person name="Huang S.M."/>
            <person name="Lin S.H."/>
        </authorList>
    </citation>
    <scope>FUNCTION</scope>
    <scope>MUTAGENESIS OF 470-TRP--LEU-587</scope>
</reference>
<evidence type="ECO:0000250" key="1">
    <source>
        <dbReference type="UniProtKB" id="Q9UH77"/>
    </source>
</evidence>
<evidence type="ECO:0000255" key="2">
    <source>
        <dbReference type="PROSITE-ProRule" id="PRU00037"/>
    </source>
</evidence>
<evidence type="ECO:0000256" key="3">
    <source>
        <dbReference type="SAM" id="MobiDB-lite"/>
    </source>
</evidence>
<evidence type="ECO:0000269" key="4">
    <source>
    </source>
</evidence>
<evidence type="ECO:0000269" key="5">
    <source>
    </source>
</evidence>
<evidence type="ECO:0000269" key="6">
    <source>
    </source>
</evidence>
<evidence type="ECO:0000269" key="7">
    <source>
    </source>
</evidence>
<evidence type="ECO:0000269" key="8">
    <source>
    </source>
</evidence>
<evidence type="ECO:0000269" key="9">
    <source>
    </source>
</evidence>
<evidence type="ECO:0000269" key="10">
    <source>
    </source>
</evidence>
<evidence type="ECO:0000303" key="11">
    <source>
    </source>
</evidence>
<evidence type="ECO:0000305" key="12"/>
<evidence type="ECO:0000312" key="13">
    <source>
        <dbReference type="MGI" id="MGI:2445185"/>
    </source>
</evidence>
<proteinExistence type="evidence at protein level"/>
<name>KLHL3_MOUSE</name>
<protein>
    <recommendedName>
        <fullName evidence="11">Kelch-like protein 3</fullName>
    </recommendedName>
</protein>
<gene>
    <name evidence="11 13" type="primary">Klhl3</name>
</gene>
<dbReference type="EMBL" id="AC142258">
    <property type="status" value="NOT_ANNOTATED_CDS"/>
    <property type="molecule type" value="Genomic_DNA"/>
</dbReference>
<dbReference type="EMBL" id="AC165251">
    <property type="status" value="NOT_ANNOTATED_CDS"/>
    <property type="molecule type" value="Genomic_DNA"/>
</dbReference>
<dbReference type="CCDS" id="CCDS88463.1">
    <molecule id="E0CZ16-1"/>
</dbReference>
<dbReference type="RefSeq" id="NP_001182004.1">
    <property type="nucleotide sequence ID" value="NM_001195075.1"/>
</dbReference>
<dbReference type="RefSeq" id="NP_001349344.2">
    <molecule id="E0CZ16-1"/>
    <property type="nucleotide sequence ID" value="NM_001362415.3"/>
</dbReference>
<dbReference type="SMR" id="E0CZ16"/>
<dbReference type="BioGRID" id="437092">
    <property type="interactions" value="8"/>
</dbReference>
<dbReference type="FunCoup" id="E0CZ16">
    <property type="interactions" value="106"/>
</dbReference>
<dbReference type="IntAct" id="E0CZ16">
    <property type="interactions" value="1"/>
</dbReference>
<dbReference type="STRING" id="10090.ENSMUSP00000123701"/>
<dbReference type="GlyGen" id="E0CZ16">
    <property type="glycosylation" value="1 site, 1 N-linked glycan (1 site)"/>
</dbReference>
<dbReference type="iPTMnet" id="E0CZ16"/>
<dbReference type="PhosphoSitePlus" id="E0CZ16"/>
<dbReference type="PaxDb" id="10090-ENSMUSP00000089173"/>
<dbReference type="ProteomicsDB" id="263631">
    <molecule id="E0CZ16-1"/>
</dbReference>
<dbReference type="ProteomicsDB" id="263632">
    <molecule id="E0CZ16-2"/>
</dbReference>
<dbReference type="Antibodypedia" id="14776">
    <property type="antibodies" value="261 antibodies from 28 providers"/>
</dbReference>
<dbReference type="Ensembl" id="ENSMUST00000160860.9">
    <molecule id="E0CZ16-1"/>
    <property type="protein sequence ID" value="ENSMUSP00000123701.3"/>
    <property type="gene ID" value="ENSMUSG00000014164.16"/>
</dbReference>
<dbReference type="GeneID" id="100503085"/>
<dbReference type="UCSC" id="uc011zal.1">
    <molecule id="E0CZ16-2"/>
    <property type="organism name" value="mouse"/>
</dbReference>
<dbReference type="AGR" id="MGI:2445185"/>
<dbReference type="MGI" id="MGI:2445185">
    <property type="gene designation" value="Klhl3"/>
</dbReference>
<dbReference type="VEuPathDB" id="HostDB:ENSMUSG00000014164"/>
<dbReference type="eggNOG" id="KOG4441">
    <property type="taxonomic scope" value="Eukaryota"/>
</dbReference>
<dbReference type="GeneTree" id="ENSGT00940000157891"/>
<dbReference type="InParanoid" id="E0CZ16"/>
<dbReference type="OMA" id="EVPAHKN"/>
<dbReference type="TreeFam" id="TF329218"/>
<dbReference type="Reactome" id="R-MMU-8951664">
    <property type="pathway name" value="Neddylation"/>
</dbReference>
<dbReference type="Reactome" id="R-MMU-983168">
    <property type="pathway name" value="Antigen processing: Ubiquitination &amp; Proteasome degradation"/>
</dbReference>
<dbReference type="UniPathway" id="UPA00143"/>
<dbReference type="BioGRID-ORCS" id="100503085">
    <property type="hits" value="4 hits in 76 CRISPR screens"/>
</dbReference>
<dbReference type="PRO" id="PR:E0CZ16"/>
<dbReference type="Proteomes" id="UP000000589">
    <property type="component" value="Chromosome 13"/>
</dbReference>
<dbReference type="RNAct" id="E0CZ16">
    <property type="molecule type" value="protein"/>
</dbReference>
<dbReference type="Bgee" id="ENSMUSG00000014164">
    <property type="expression patterns" value="Expressed in dentate gyrus of hippocampal formation granule cell and 61 other cell types or tissues"/>
</dbReference>
<dbReference type="GO" id="GO:0031463">
    <property type="term" value="C:Cul3-RING ubiquitin ligase complex"/>
    <property type="evidence" value="ECO:0000250"/>
    <property type="project" value="UniProtKB"/>
</dbReference>
<dbReference type="GO" id="GO:0005856">
    <property type="term" value="C:cytoskeleton"/>
    <property type="evidence" value="ECO:0007669"/>
    <property type="project" value="UniProtKB-SubCell"/>
</dbReference>
<dbReference type="GO" id="GO:0005829">
    <property type="term" value="C:cytosol"/>
    <property type="evidence" value="ECO:0000250"/>
    <property type="project" value="UniProtKB"/>
</dbReference>
<dbReference type="GO" id="GO:0003779">
    <property type="term" value="F:actin binding"/>
    <property type="evidence" value="ECO:0007669"/>
    <property type="project" value="UniProtKB-KW"/>
</dbReference>
<dbReference type="GO" id="GO:0097602">
    <property type="term" value="F:cullin family protein binding"/>
    <property type="evidence" value="ECO:0007669"/>
    <property type="project" value="Ensembl"/>
</dbReference>
<dbReference type="GO" id="GO:1990756">
    <property type="term" value="F:ubiquitin-like ligase-substrate adaptor activity"/>
    <property type="evidence" value="ECO:0000250"/>
    <property type="project" value="UniProtKB"/>
</dbReference>
<dbReference type="GO" id="GO:0072156">
    <property type="term" value="P:distal tubule morphogenesis"/>
    <property type="evidence" value="ECO:0000250"/>
    <property type="project" value="UniProtKB"/>
</dbReference>
<dbReference type="GO" id="GO:0010467">
    <property type="term" value="P:gene expression"/>
    <property type="evidence" value="ECO:0000315"/>
    <property type="project" value="MGI"/>
</dbReference>
<dbReference type="GO" id="GO:0050801">
    <property type="term" value="P:monoatomic ion homeostasis"/>
    <property type="evidence" value="ECO:0000315"/>
    <property type="project" value="MGI"/>
</dbReference>
<dbReference type="GO" id="GO:0055075">
    <property type="term" value="P:potassium ion homeostasis"/>
    <property type="evidence" value="ECO:0000315"/>
    <property type="project" value="MGI"/>
</dbReference>
<dbReference type="GO" id="GO:0043161">
    <property type="term" value="P:proteasome-mediated ubiquitin-dependent protein catabolic process"/>
    <property type="evidence" value="ECO:0007669"/>
    <property type="project" value="Ensembl"/>
</dbReference>
<dbReference type="GO" id="GO:0030163">
    <property type="term" value="P:protein catabolic process"/>
    <property type="evidence" value="ECO:0000315"/>
    <property type="project" value="MGI"/>
</dbReference>
<dbReference type="GO" id="GO:0070936">
    <property type="term" value="P:protein K48-linked ubiquitination"/>
    <property type="evidence" value="ECO:0000250"/>
    <property type="project" value="UniProtKB"/>
</dbReference>
<dbReference type="GO" id="GO:0000209">
    <property type="term" value="P:protein polyubiquitination"/>
    <property type="evidence" value="ECO:0000315"/>
    <property type="project" value="MGI"/>
</dbReference>
<dbReference type="GO" id="GO:0016567">
    <property type="term" value="P:protein ubiquitination"/>
    <property type="evidence" value="ECO:0000250"/>
    <property type="project" value="UniProtKB"/>
</dbReference>
<dbReference type="GO" id="GO:0070293">
    <property type="term" value="P:renal absorption"/>
    <property type="evidence" value="ECO:0000315"/>
    <property type="project" value="MGI"/>
</dbReference>
<dbReference type="GO" id="GO:0070294">
    <property type="term" value="P:renal sodium ion absorption"/>
    <property type="evidence" value="ECO:0000315"/>
    <property type="project" value="UniProtKB"/>
</dbReference>
<dbReference type="GO" id="GO:0006511">
    <property type="term" value="P:ubiquitin-dependent protein catabolic process"/>
    <property type="evidence" value="ECO:0000315"/>
    <property type="project" value="UniProtKB"/>
</dbReference>
<dbReference type="CDD" id="cd18513">
    <property type="entry name" value="BACK_KLHL3"/>
    <property type="match status" value="1"/>
</dbReference>
<dbReference type="CDD" id="cd18339">
    <property type="entry name" value="BTB_POZ_KLHL3"/>
    <property type="match status" value="1"/>
</dbReference>
<dbReference type="FunFam" id="1.25.40.420:FF:000001">
    <property type="entry name" value="Kelch-like family member 12"/>
    <property type="match status" value="1"/>
</dbReference>
<dbReference type="FunFam" id="2.120.10.80:FF:000002">
    <property type="entry name" value="Kelch-like family member 2"/>
    <property type="match status" value="1"/>
</dbReference>
<dbReference type="FunFam" id="3.30.710.10:FF:000001">
    <property type="entry name" value="Kelch-like family member 20"/>
    <property type="match status" value="1"/>
</dbReference>
<dbReference type="Gene3D" id="1.25.40.420">
    <property type="match status" value="1"/>
</dbReference>
<dbReference type="Gene3D" id="2.120.10.80">
    <property type="entry name" value="Kelch-type beta propeller"/>
    <property type="match status" value="1"/>
</dbReference>
<dbReference type="Gene3D" id="3.30.710.10">
    <property type="entry name" value="Potassium Channel Kv1.1, Chain A"/>
    <property type="match status" value="1"/>
</dbReference>
<dbReference type="InterPro" id="IPR011705">
    <property type="entry name" value="BACK"/>
</dbReference>
<dbReference type="InterPro" id="IPR017096">
    <property type="entry name" value="BTB-kelch_protein"/>
</dbReference>
<dbReference type="InterPro" id="IPR000210">
    <property type="entry name" value="BTB/POZ_dom"/>
</dbReference>
<dbReference type="InterPro" id="IPR015915">
    <property type="entry name" value="Kelch-typ_b-propeller"/>
</dbReference>
<dbReference type="InterPro" id="IPR006652">
    <property type="entry name" value="Kelch_1"/>
</dbReference>
<dbReference type="InterPro" id="IPR030578">
    <property type="entry name" value="KLHL3_BACK"/>
</dbReference>
<dbReference type="InterPro" id="IPR011041">
    <property type="entry name" value="Quinoprot_gluc/sorb_DH_b-prop"/>
</dbReference>
<dbReference type="InterPro" id="IPR011333">
    <property type="entry name" value="SKP1/BTB/POZ_sf"/>
</dbReference>
<dbReference type="PANTHER" id="PTHR24412">
    <property type="entry name" value="KELCH PROTEIN"/>
    <property type="match status" value="1"/>
</dbReference>
<dbReference type="PANTHER" id="PTHR24412:SF179">
    <property type="entry name" value="KELCH-LIKE PROTEIN 3"/>
    <property type="match status" value="1"/>
</dbReference>
<dbReference type="Pfam" id="PF07707">
    <property type="entry name" value="BACK"/>
    <property type="match status" value="1"/>
</dbReference>
<dbReference type="Pfam" id="PF00651">
    <property type="entry name" value="BTB"/>
    <property type="match status" value="1"/>
</dbReference>
<dbReference type="Pfam" id="PF01344">
    <property type="entry name" value="Kelch_1"/>
    <property type="match status" value="6"/>
</dbReference>
<dbReference type="PIRSF" id="PIRSF037037">
    <property type="entry name" value="Kelch-like_protein_gigaxonin"/>
    <property type="match status" value="1"/>
</dbReference>
<dbReference type="PRINTS" id="PR00501">
    <property type="entry name" value="KELCHREPEAT"/>
</dbReference>
<dbReference type="SMART" id="SM00875">
    <property type="entry name" value="BACK"/>
    <property type="match status" value="1"/>
</dbReference>
<dbReference type="SMART" id="SM00225">
    <property type="entry name" value="BTB"/>
    <property type="match status" value="1"/>
</dbReference>
<dbReference type="SMART" id="SM00612">
    <property type="entry name" value="Kelch"/>
    <property type="match status" value="6"/>
</dbReference>
<dbReference type="SUPFAM" id="SSF117281">
    <property type="entry name" value="Kelch motif"/>
    <property type="match status" value="1"/>
</dbReference>
<dbReference type="SUPFAM" id="SSF54695">
    <property type="entry name" value="POZ domain"/>
    <property type="match status" value="1"/>
</dbReference>
<dbReference type="SUPFAM" id="SSF50952">
    <property type="entry name" value="Soluble quinoprotein glucose dehydrogenase"/>
    <property type="match status" value="1"/>
</dbReference>
<dbReference type="PROSITE" id="PS50097">
    <property type="entry name" value="BTB"/>
    <property type="match status" value="1"/>
</dbReference>
<keyword id="KW-0009">Actin-binding</keyword>
<keyword id="KW-0025">Alternative splicing</keyword>
<keyword id="KW-0963">Cytoplasm</keyword>
<keyword id="KW-0206">Cytoskeleton</keyword>
<keyword id="KW-0880">Kelch repeat</keyword>
<keyword id="KW-0597">Phosphoprotein</keyword>
<keyword id="KW-1185">Reference proteome</keyword>
<keyword id="KW-0677">Repeat</keyword>
<keyword id="KW-0833">Ubl conjugation pathway</keyword>
<organism>
    <name type="scientific">Mus musculus</name>
    <name type="common">Mouse</name>
    <dbReference type="NCBI Taxonomy" id="10090"/>
    <lineage>
        <taxon>Eukaryota</taxon>
        <taxon>Metazoa</taxon>
        <taxon>Chordata</taxon>
        <taxon>Craniata</taxon>
        <taxon>Vertebrata</taxon>
        <taxon>Euteleostomi</taxon>
        <taxon>Mammalia</taxon>
        <taxon>Eutheria</taxon>
        <taxon>Euarchontoglires</taxon>
        <taxon>Glires</taxon>
        <taxon>Rodentia</taxon>
        <taxon>Myomorpha</taxon>
        <taxon>Muroidea</taxon>
        <taxon>Muridae</taxon>
        <taxon>Murinae</taxon>
        <taxon>Mus</taxon>
        <taxon>Mus</taxon>
    </lineage>
</organism>
<feature type="chain" id="PRO_0000417531" description="Kelch-like protein 3">
    <location>
        <begin position="1"/>
        <end position="587"/>
    </location>
</feature>
<feature type="domain" description="BTB" evidence="2">
    <location>
        <begin position="50"/>
        <end position="117"/>
    </location>
</feature>
<feature type="domain" description="BACK">
    <location>
        <begin position="152"/>
        <end position="254"/>
    </location>
</feature>
<feature type="repeat" description="Kelch 1">
    <location>
        <begin position="302"/>
        <end position="347"/>
    </location>
</feature>
<feature type="repeat" description="Kelch 2">
    <location>
        <begin position="348"/>
        <end position="394"/>
    </location>
</feature>
<feature type="repeat" description="Kelch 3">
    <location>
        <begin position="396"/>
        <end position="441"/>
    </location>
</feature>
<feature type="repeat" description="Kelch 4">
    <location>
        <begin position="442"/>
        <end position="490"/>
    </location>
</feature>
<feature type="repeat" description="Kelch 5">
    <location>
        <begin position="491"/>
        <end position="537"/>
    </location>
</feature>
<feature type="repeat" description="Kelch 6">
    <location>
        <begin position="539"/>
        <end position="585"/>
    </location>
</feature>
<feature type="region of interest" description="Disordered" evidence="3">
    <location>
        <begin position="1"/>
        <end position="24"/>
    </location>
</feature>
<feature type="modified residue" description="Phosphothreonine" evidence="1">
    <location>
        <position position="295"/>
    </location>
</feature>
<feature type="modified residue" description="Phosphothreonine" evidence="1">
    <location>
        <position position="375"/>
    </location>
</feature>
<feature type="modified residue" description="Phosphoserine" evidence="1">
    <location>
        <position position="376"/>
    </location>
</feature>
<feature type="modified residue" description="Phosphoserine" evidence="7">
    <location>
        <position position="433"/>
    </location>
</feature>
<feature type="splice variant" id="VSP_053297" description="In isoform 2." evidence="12">
    <original>MEGE</original>
    <variation>MAYYIMIPCQVGKRGHRLWTWTRVAARINVALCFVGGESAWFLLVSRLTSASGGKGL</variation>
    <location>
        <begin position="1"/>
        <end position="4"/>
    </location>
</feature>
<feature type="mutagenesis site" description="Knockin mice display a pseudohypoaldosteronism type II (PHA2)-like phenotype, characterized by low-renin hypertension, hyperkalemia with reduced renal potassium excretion and hyperchloremic metabolic acidosis. Cells show increased levels of WNK1 and WNK4." evidence="10">
    <location>
        <begin position="470"/>
        <end position="587"/>
    </location>
</feature>
<feature type="mutagenesis site" description="Knockin mice display a pseudohypoaldosteronism type II (PHA2)-like phenotype, characterized by low-renin hypertension, hyperkalemia with reduced renal potassium excretion and hyperchloremic metabolic acidosis. Cells show increased levels of WNK1 and WNK4." evidence="6">
    <original>R</original>
    <variation>H</variation>
    <location>
        <position position="528"/>
    </location>
</feature>